<gene>
    <name evidence="1" type="primary">tauB</name>
    <name type="ordered locus">YPN_3884</name>
    <name type="ORF">YP516_4410</name>
</gene>
<sequence>MLNVSGLWAEYQGKPALQDVSLQIASGQLVVVLGPSGCGKTTLLNLIAGFMTPSAGVITLDNIPVSGPSAERGVVFQNEGLLPWRDVVSNVEFGLQLAGMSKEQRRVTALKMLNRVGLAGFEHHFIWQLSGGMRQRVGIARALAVDPRLLLLDEPFGALDAFTREQMQELLLTIWRDTGKQILLITHDIEEAVFLASELLLLSPGPGQVVERLSLNFGQRYAEGEPCRAIKSDPEFIARREDVLGKVFQQREVLI</sequence>
<organism>
    <name type="scientific">Yersinia pestis bv. Antiqua (strain Nepal516)</name>
    <dbReference type="NCBI Taxonomy" id="377628"/>
    <lineage>
        <taxon>Bacteria</taxon>
        <taxon>Pseudomonadati</taxon>
        <taxon>Pseudomonadota</taxon>
        <taxon>Gammaproteobacteria</taxon>
        <taxon>Enterobacterales</taxon>
        <taxon>Yersiniaceae</taxon>
        <taxon>Yersinia</taxon>
    </lineage>
</organism>
<dbReference type="EC" id="7.6.2.7" evidence="1"/>
<dbReference type="EMBL" id="CP000305">
    <property type="protein sequence ID" value="ABG20211.1"/>
    <property type="molecule type" value="Genomic_DNA"/>
</dbReference>
<dbReference type="EMBL" id="ACNQ01000019">
    <property type="protein sequence ID" value="EEO74800.1"/>
    <property type="molecule type" value="Genomic_DNA"/>
</dbReference>
<dbReference type="RefSeq" id="WP_002212307.1">
    <property type="nucleotide sequence ID" value="NZ_ACNQ01000019.1"/>
</dbReference>
<dbReference type="SMR" id="Q1CCR9"/>
<dbReference type="GeneID" id="57974419"/>
<dbReference type="KEGG" id="ypn:YPN_3884"/>
<dbReference type="HOGENOM" id="CLU_000604_1_22_6"/>
<dbReference type="Proteomes" id="UP000008936">
    <property type="component" value="Chromosome"/>
</dbReference>
<dbReference type="GO" id="GO:0005886">
    <property type="term" value="C:plasma membrane"/>
    <property type="evidence" value="ECO:0007669"/>
    <property type="project" value="UniProtKB-SubCell"/>
</dbReference>
<dbReference type="GO" id="GO:0015411">
    <property type="term" value="F:ABC-type taurine transporter transporter activity"/>
    <property type="evidence" value="ECO:0007669"/>
    <property type="project" value="UniProtKB-EC"/>
</dbReference>
<dbReference type="GO" id="GO:0005524">
    <property type="term" value="F:ATP binding"/>
    <property type="evidence" value="ECO:0007669"/>
    <property type="project" value="UniProtKB-KW"/>
</dbReference>
<dbReference type="GO" id="GO:0016887">
    <property type="term" value="F:ATP hydrolysis activity"/>
    <property type="evidence" value="ECO:0007669"/>
    <property type="project" value="InterPro"/>
</dbReference>
<dbReference type="CDD" id="cd03293">
    <property type="entry name" value="ABC_NrtD_SsuB_transporters"/>
    <property type="match status" value="1"/>
</dbReference>
<dbReference type="Gene3D" id="3.40.50.300">
    <property type="entry name" value="P-loop containing nucleotide triphosphate hydrolases"/>
    <property type="match status" value="1"/>
</dbReference>
<dbReference type="InterPro" id="IPR003593">
    <property type="entry name" value="AAA+_ATPase"/>
</dbReference>
<dbReference type="InterPro" id="IPR003439">
    <property type="entry name" value="ABC_transporter-like_ATP-bd"/>
</dbReference>
<dbReference type="InterPro" id="IPR017871">
    <property type="entry name" value="ABC_transporter-like_CS"/>
</dbReference>
<dbReference type="InterPro" id="IPR050166">
    <property type="entry name" value="ABC_transporter_ATP-bind"/>
</dbReference>
<dbReference type="InterPro" id="IPR027417">
    <property type="entry name" value="P-loop_NTPase"/>
</dbReference>
<dbReference type="NCBIfam" id="NF008421">
    <property type="entry name" value="PRK11248.1"/>
    <property type="match status" value="1"/>
</dbReference>
<dbReference type="PANTHER" id="PTHR42788:SF18">
    <property type="entry name" value="TAURINE IMPORT ATP-BINDING PROTEIN TAUB"/>
    <property type="match status" value="1"/>
</dbReference>
<dbReference type="PANTHER" id="PTHR42788">
    <property type="entry name" value="TAURINE IMPORT ATP-BINDING PROTEIN-RELATED"/>
    <property type="match status" value="1"/>
</dbReference>
<dbReference type="Pfam" id="PF00005">
    <property type="entry name" value="ABC_tran"/>
    <property type="match status" value="1"/>
</dbReference>
<dbReference type="SMART" id="SM00382">
    <property type="entry name" value="AAA"/>
    <property type="match status" value="1"/>
</dbReference>
<dbReference type="SUPFAM" id="SSF52540">
    <property type="entry name" value="P-loop containing nucleoside triphosphate hydrolases"/>
    <property type="match status" value="1"/>
</dbReference>
<dbReference type="PROSITE" id="PS00211">
    <property type="entry name" value="ABC_TRANSPORTER_1"/>
    <property type="match status" value="1"/>
</dbReference>
<dbReference type="PROSITE" id="PS50893">
    <property type="entry name" value="ABC_TRANSPORTER_2"/>
    <property type="match status" value="1"/>
</dbReference>
<dbReference type="PROSITE" id="PS51250">
    <property type="entry name" value="TAUB"/>
    <property type="match status" value="1"/>
</dbReference>
<proteinExistence type="inferred from homology"/>
<evidence type="ECO:0000255" key="1">
    <source>
        <dbReference type="HAMAP-Rule" id="MF_01714"/>
    </source>
</evidence>
<accession>Q1CCR9</accession>
<accession>D1Q2P7</accession>
<protein>
    <recommendedName>
        <fullName evidence="1">Taurine import ATP-binding protein TauB</fullName>
        <ecNumber evidence="1">7.6.2.7</ecNumber>
    </recommendedName>
</protein>
<name>TAUB_YERPN</name>
<reference key="1">
    <citation type="journal article" date="2006" name="J. Bacteriol.">
        <title>Complete genome sequence of Yersinia pestis strains Antiqua and Nepal516: evidence of gene reduction in an emerging pathogen.</title>
        <authorList>
            <person name="Chain P.S.G."/>
            <person name="Hu P."/>
            <person name="Malfatti S.A."/>
            <person name="Radnedge L."/>
            <person name="Larimer F."/>
            <person name="Vergez L.M."/>
            <person name="Worsham P."/>
            <person name="Chu M.C."/>
            <person name="Andersen G.L."/>
        </authorList>
    </citation>
    <scope>NUCLEOTIDE SEQUENCE [LARGE SCALE GENOMIC DNA]</scope>
    <source>
        <strain>Nepal516</strain>
    </source>
</reference>
<reference key="2">
    <citation type="submission" date="2009-04" db="EMBL/GenBank/DDBJ databases">
        <title>Yersinia pestis Nepal516A whole genome shotgun sequencing project.</title>
        <authorList>
            <person name="Plunkett G. III"/>
            <person name="Anderson B.D."/>
            <person name="Baumler D.J."/>
            <person name="Burland V."/>
            <person name="Cabot E.L."/>
            <person name="Glasner J.D."/>
            <person name="Mau B."/>
            <person name="Neeno-Eckwall E."/>
            <person name="Perna N.T."/>
            <person name="Munk A.C."/>
            <person name="Tapia R."/>
            <person name="Green L.D."/>
            <person name="Rogers Y.C."/>
            <person name="Detter J.C."/>
            <person name="Bruce D.C."/>
            <person name="Brettin T.S."/>
        </authorList>
    </citation>
    <scope>NUCLEOTIDE SEQUENCE [LARGE SCALE GENOMIC DNA]</scope>
    <source>
        <strain>Nepal516</strain>
    </source>
</reference>
<feature type="chain" id="PRO_0000275848" description="Taurine import ATP-binding protein TauB">
    <location>
        <begin position="1"/>
        <end position="255"/>
    </location>
</feature>
<feature type="domain" description="ABC transporter" evidence="1">
    <location>
        <begin position="2"/>
        <end position="229"/>
    </location>
</feature>
<feature type="binding site" evidence="1">
    <location>
        <begin position="34"/>
        <end position="41"/>
    </location>
    <ligand>
        <name>ATP</name>
        <dbReference type="ChEBI" id="CHEBI:30616"/>
    </ligand>
</feature>
<comment type="function">
    <text evidence="1">Part of the ABC transporter complex TauABC involved in taurine import. Responsible for energy coupling to the transport system.</text>
</comment>
<comment type="catalytic activity">
    <reaction evidence="1">
        <text>taurine(out) + ATP + H2O = taurine(in) + ADP + phosphate + H(+)</text>
        <dbReference type="Rhea" id="RHEA:14613"/>
        <dbReference type="ChEBI" id="CHEBI:15377"/>
        <dbReference type="ChEBI" id="CHEBI:15378"/>
        <dbReference type="ChEBI" id="CHEBI:30616"/>
        <dbReference type="ChEBI" id="CHEBI:43474"/>
        <dbReference type="ChEBI" id="CHEBI:456216"/>
        <dbReference type="ChEBI" id="CHEBI:507393"/>
        <dbReference type="EC" id="7.6.2.7"/>
    </reaction>
</comment>
<comment type="subunit">
    <text evidence="1">The complex is composed of two ATP-binding proteins (TauB), two transmembrane proteins (TauC) and a solute-binding protein (TauA).</text>
</comment>
<comment type="subcellular location">
    <subcellularLocation>
        <location evidence="1">Cell inner membrane</location>
        <topology evidence="1">Peripheral membrane protein</topology>
    </subcellularLocation>
</comment>
<comment type="similarity">
    <text evidence="1">Belongs to the ABC transporter superfamily. Taurine importer (TC 3.A.1.17.1) family.</text>
</comment>
<keyword id="KW-0067">ATP-binding</keyword>
<keyword id="KW-0997">Cell inner membrane</keyword>
<keyword id="KW-1003">Cell membrane</keyword>
<keyword id="KW-0472">Membrane</keyword>
<keyword id="KW-0547">Nucleotide-binding</keyword>
<keyword id="KW-1278">Translocase</keyword>
<keyword id="KW-0813">Transport</keyword>